<keyword id="KW-0067">ATP-binding</keyword>
<keyword id="KW-0255">Endonuclease</keyword>
<keyword id="KW-1035">Host cytoplasm</keyword>
<keyword id="KW-0378">Hydrolase</keyword>
<keyword id="KW-0460">Magnesium</keyword>
<keyword id="KW-0479">Metal-binding</keyword>
<keyword id="KW-0540">Nuclease</keyword>
<keyword id="KW-0547">Nucleotide-binding</keyword>
<keyword id="KW-0231">Viral genome packaging</keyword>
<keyword id="KW-1188">Viral release from host cell</keyword>
<proteinExistence type="inferred from homology"/>
<organismHost>
    <name type="scientific">Escherichia coli</name>
    <dbReference type="NCBI Taxonomy" id="562"/>
</organismHost>
<gene>
    <name type="primary">2</name>
</gene>
<protein>
    <recommendedName>
        <fullName evidence="3">Terminase, large subunit</fullName>
    </recommendedName>
    <alternativeName>
        <fullName evidence="3">DNA-packaging protein</fullName>
    </alternativeName>
    <alternativeName>
        <fullName>DNA-packaging protein gp2</fullName>
    </alternativeName>
    <alternativeName>
        <fullName>Gene product 2</fullName>
        <shortName>gp2</shortName>
    </alternativeName>
    <alternativeName>
        <fullName evidence="3">Large terminase protein</fullName>
    </alternativeName>
    <domain>
        <recommendedName>
            <fullName evidence="3">Endonuclease</fullName>
            <ecNumber evidence="3">3.1.21.4</ecNumber>
        </recommendedName>
    </domain>
    <domain>
        <recommendedName>
            <fullName evidence="3">ATPase</fullName>
            <ecNumber evidence="3">3.6.4.-</ecNumber>
        </recommendedName>
    </domain>
</protein>
<organism>
    <name type="scientific">Enterobacteria phage P21</name>
    <name type="common">Bacteriophage 21</name>
    <name type="synonym">Bacteriophage P21</name>
    <dbReference type="NCBI Taxonomy" id="10711"/>
    <lineage>
        <taxon>Viruses</taxon>
        <taxon>Duplodnaviria</taxon>
        <taxon>Heunggongvirae</taxon>
        <taxon>Uroviricota</taxon>
        <taxon>Caudoviricetes</taxon>
        <taxon>Lambdavirus</taxon>
        <taxon>Lambdavirus lambda</taxon>
    </lineage>
</organism>
<dbReference type="EC" id="3.1.21.4" evidence="3"/>
<dbReference type="EC" id="3.6.4.-" evidence="3"/>
<dbReference type="EMBL" id="M81255">
    <property type="protein sequence ID" value="AAA32340.1"/>
    <property type="molecule type" value="Genomic_DNA"/>
</dbReference>
<dbReference type="EMBL" id="X02501">
    <property type="protein sequence ID" value="CAA26343.1"/>
    <property type="molecule type" value="Genomic_DNA"/>
</dbReference>
<dbReference type="EMBL" id="M23775">
    <property type="protein sequence ID" value="AAA32338.1"/>
    <property type="molecule type" value="Genomic_DNA"/>
</dbReference>
<dbReference type="EMBL" id="X12638">
    <property type="protein sequence ID" value="CAA31174.1"/>
    <property type="molecule type" value="Genomic_DNA"/>
</dbReference>
<dbReference type="PIR" id="B49849">
    <property type="entry name" value="B49849"/>
</dbReference>
<dbReference type="GO" id="GO:0030430">
    <property type="term" value="C:host cell cytoplasm"/>
    <property type="evidence" value="ECO:0007669"/>
    <property type="project" value="UniProtKB-SubCell"/>
</dbReference>
<dbReference type="GO" id="GO:0098009">
    <property type="term" value="C:viral terminase, large subunit"/>
    <property type="evidence" value="ECO:0007669"/>
    <property type="project" value="UniProtKB-UniRule"/>
</dbReference>
<dbReference type="GO" id="GO:0005524">
    <property type="term" value="F:ATP binding"/>
    <property type="evidence" value="ECO:0007669"/>
    <property type="project" value="UniProtKB-UniRule"/>
</dbReference>
<dbReference type="GO" id="GO:0016887">
    <property type="term" value="F:ATP hydrolysis activity"/>
    <property type="evidence" value="ECO:0007669"/>
    <property type="project" value="UniProtKB-UniRule"/>
</dbReference>
<dbReference type="GO" id="GO:0003678">
    <property type="term" value="F:DNA helicase activity"/>
    <property type="evidence" value="ECO:0007669"/>
    <property type="project" value="UniProtKB-UniRule"/>
</dbReference>
<dbReference type="GO" id="GO:0046872">
    <property type="term" value="F:metal ion binding"/>
    <property type="evidence" value="ECO:0007669"/>
    <property type="project" value="UniProtKB-UniRule"/>
</dbReference>
<dbReference type="GO" id="GO:0009036">
    <property type="term" value="F:type II site-specific deoxyribonuclease activity"/>
    <property type="evidence" value="ECO:0007669"/>
    <property type="project" value="UniProtKB-UniRule"/>
</dbReference>
<dbReference type="GO" id="GO:0019073">
    <property type="term" value="P:viral DNA genome packaging"/>
    <property type="evidence" value="ECO:0007669"/>
    <property type="project" value="UniProtKB-UniRule"/>
</dbReference>
<dbReference type="HAMAP" id="MF_04144">
    <property type="entry name" value="TERL_LAMBDA"/>
    <property type="match status" value="1"/>
</dbReference>
<dbReference type="InterPro" id="IPR046453">
    <property type="entry name" value="GpA_ATPase"/>
</dbReference>
<dbReference type="InterPro" id="IPR046454">
    <property type="entry name" value="GpA_endonuclease"/>
</dbReference>
<dbReference type="InterPro" id="IPR008866">
    <property type="entry name" value="Phage_lambda_GpA-like"/>
</dbReference>
<dbReference type="InterPro" id="IPR051220">
    <property type="entry name" value="TFA_Chaperone"/>
</dbReference>
<dbReference type="PANTHER" id="PTHR34413:SF2">
    <property type="entry name" value="PROPHAGE TAIL FIBER ASSEMBLY PROTEIN HOMOLOG TFAE-RELATED"/>
    <property type="match status" value="1"/>
</dbReference>
<dbReference type="PANTHER" id="PTHR34413">
    <property type="entry name" value="PROPHAGE TAIL FIBER ASSEMBLY PROTEIN HOMOLOG TFAE-RELATED-RELATED"/>
    <property type="match status" value="1"/>
</dbReference>
<dbReference type="Pfam" id="PF05876">
    <property type="entry name" value="GpA_ATPase"/>
    <property type="match status" value="1"/>
</dbReference>
<dbReference type="Pfam" id="PF20454">
    <property type="entry name" value="GpA_nuclease"/>
    <property type="match status" value="1"/>
</dbReference>
<name>TERL_BPP21</name>
<comment type="function">
    <text evidence="3">The terminase large subunit acts as an ATP driven molecular motor necessary for viral DNA translocation into empty capsids and as an endonuclease that cuts the viral genome from the concetamer to initiate and to end the packaging reaction. The terminase lies at a unique vertex of the procapsid and is composed of two subunits, a small terminase subunit involved in viral DNA recognition (binding to packaging sequence cos), and a large terminase subunit possessing endonucleolytic and ATPase activities (DNA maturation and packaging). The terminase binds cooperatively with the host factor IHFA/IHFB to the cos site at the junction of adjacent viral genomes. The endonuclease activity cleaves the viral DNA generating 5'overhangs of 12 bp in length. The strand separation activity separates the cohesive ends generating the single-stranded 'sticky' ends of the mature genome. IHFA/IHFB is also necessary for the strand separation activity of the terminase. The terminase remains bound to the left end of the genome to be packaged, forming a stable DNA-terminase complex. In a reaction facilitated by the viral assembly catalyst gpFI, the DNA-terminase complex binds to the portal of the procapsid thereby activating the translocase activity of the terminase. The terminase packages the viral DNA into the procapsid until the next cos site on the concatemer reaches the complex. The downstream cos site is then cut generating the mature right end of the genome, the heterotrimer undocks from the DNA-filled head and remains bound to the left end of concatemer's next genome.</text>
</comment>
<comment type="catalytic activity">
    <reaction evidence="3">
        <text>Endonucleolytic cleavage of DNA to give specific double-stranded fragments with terminal 5'-phosphates.</text>
        <dbReference type="EC" id="3.1.21.4"/>
    </reaction>
</comment>
<comment type="cofactor">
    <cofactor evidence="3">
        <name>Mg(2+)</name>
        <dbReference type="ChEBI" id="CHEBI:18420"/>
    </cofactor>
    <text evidence="2">Probably binds 2 Mg(2+) ions per subunit (By similarity). Necessary for the ATPase activity (By similarity).</text>
</comment>
<comment type="subunit">
    <text evidence="3">Heterotrimer of two small and one large terminase subunits. The catalytically competent terminase is composed of a tetramer of heterotrimers. The tetramer forms a ring structure large enough to encircle duplex DNA. Host IHFA/IHFB induces bending of viral DNA to facilitate the assembly of the terminase tetramer of heterotrimers. Interacts (via N-terminus) with the terminase small subunit (via C-terminus). Interacts (via C-terminus) with the portal protein; this interaction allows the packaging of viral DNA.</text>
</comment>
<comment type="subcellular location">
    <subcellularLocation>
        <location evidence="3">Host cytoplasm</location>
    </subcellularLocation>
    <text evidence="3">The terminase lies at a unique vertex of the procapsid during viral DNA packaging.</text>
</comment>
<comment type="domain">
    <text evidence="3">The N-terminus is involved in the formation of the heterotrimer with the small subunit. The N-terminus part contains the translocase activity involved in DNA packaging. At the N-terminus, there is a high affinity ATPase center that is probably needed for the packaging activity. The Walker A motif of the ATPase center is responsible for interacting with the ATP phosphate and the Q motif governs force generation and the interaction with DNA. The C-terminus contains the site specific endonuclease (cos-cleavage) and strand separation activities required for genome maturation. A second ATPase catalytic site regulates the genome maturation. The C-terminus very end is involved in binding to the procapsid. Contains a basic leucine zipper (bZIP) that may be involved in the formation of the terminase.</text>
</comment>
<comment type="similarity">
    <text evidence="3">Belongs to the lambdavirus large terminase family.</text>
</comment>
<accession>P36693</accession>
<accession>Q38453</accession>
<reference key="1">
    <citation type="thesis" date="1991" institute="University of Iowa" country="United States">
        <authorList>
            <person name="Smith M.P."/>
        </authorList>
    </citation>
    <scope>NUCLEOTIDE SEQUENCE [GENOMIC DNA]</scope>
</reference>
<reference key="2">
    <citation type="journal article" date="1993" name="J. Bacteriol.">
        <title>Sites and gene products involved in lambdoid phage DNA packaging.</title>
        <authorList>
            <person name="Smith M.P."/>
            <person name="Feiss M."/>
        </authorList>
    </citation>
    <scope>NUCLEOTIDE SEQUENCE [GENOMIC DNA]</scope>
</reference>
<reference key="3">
    <citation type="journal article" date="1985" name="J. Mol. Biol.">
        <title>Sequence of the left end of phage 21 DNA.</title>
        <authorList>
            <person name="Miller G."/>
            <person name="Feiss M."/>
        </authorList>
    </citation>
    <scope>NUCLEOTIDE SEQUENCE [GENOMIC DNA] OF 1-309</scope>
</reference>
<reference key="4">
    <citation type="journal article" date="1988" name="Genetics">
        <title>Domains for protein-protein interactions at the N and C termini of the large subunit of bacteriophage lambda terminase.</title>
        <authorList>
            <person name="Wu W.-F."/>
            <person name="Christiansen S."/>
            <person name="Feiss M."/>
        </authorList>
    </citation>
    <scope>NUCLEOTIDE SEQUENCE [GENOMIC DNA] OF 564-642</scope>
</reference>
<reference key="5">
    <citation type="journal article" date="2008" name="Annu. Rev. Genet.">
        <title>The bacteriophage DNA packaging motor.</title>
        <authorList>
            <person name="Rao V.B."/>
            <person name="Feiss M."/>
        </authorList>
    </citation>
    <scope>REVIEW</scope>
</reference>
<feature type="chain" id="PRO_0000077674" description="Terminase, large subunit">
    <location>
        <begin position="1"/>
        <end position="642"/>
    </location>
</feature>
<feature type="region of interest" description="Interaction with the terminase small subunit" evidence="3">
    <location>
        <begin position="1"/>
        <end position="48"/>
    </location>
</feature>
<feature type="region of interest" description="DNA packaging/ATPase" evidence="3">
    <location>
        <begin position="166"/>
        <end position="353"/>
    </location>
</feature>
<feature type="region of interest" description="Endonuclease" evidence="3">
    <location>
        <begin position="401"/>
        <end position="587"/>
    </location>
</feature>
<feature type="region of interest" description="Basic" evidence="1">
    <location>
        <begin position="574"/>
        <end position="585"/>
    </location>
</feature>
<feature type="region of interest" description="Leucine zipper" evidence="1">
    <location>
        <begin position="589"/>
        <end position="617"/>
    </location>
</feature>
<feature type="region of interest" description="Prohead binding" evidence="1">
    <location>
        <begin position="611"/>
        <end position="642"/>
    </location>
</feature>
<feature type="short sequence motif" description="Q motif" evidence="1">
    <location>
        <begin position="42"/>
        <end position="51"/>
    </location>
</feature>
<feature type="short sequence motif" description="Walker A motif" evidence="3">
    <location>
        <begin position="76"/>
        <end position="83"/>
    </location>
</feature>
<feature type="short sequence motif" description="Walker B motif" evidence="3">
    <location>
        <begin position="174"/>
        <end position="179"/>
    </location>
</feature>
<feature type="active site" description="For ATPase activity" evidence="3">
    <location>
        <position position="179"/>
    </location>
</feature>
<feature type="binding site" evidence="3">
    <location>
        <position position="401"/>
    </location>
    <ligand>
        <name>Mg(2+)</name>
        <dbReference type="ChEBI" id="CHEBI:18420"/>
        <note>catalytic; for nuclease activity</note>
    </ligand>
</feature>
<feature type="binding site" evidence="3">
    <location>
        <begin position="491"/>
        <end position="498"/>
    </location>
    <ligand>
        <name>ATP</name>
        <dbReference type="ChEBI" id="CHEBI:30616"/>
    </ligand>
</feature>
<feature type="site" description="ATP-binding" evidence="3">
    <location>
        <position position="46"/>
    </location>
</feature>
<feature type="sequence conflict" description="In Ref. 3; CAA26343/AAA32338." evidence="4" ref="3">
    <original>M</original>
    <variation>L</variation>
    <location>
        <position position="129"/>
    </location>
</feature>
<sequence>MISDAQKAANAAGAIATGLLSLIIPVPLTTVQWANKHYYLPKESSYTPGRWETLPFQVGIMNCMGNDLIRTVNLIKSARVGYTKMLLGVEAYFIEHKSRNSLLFQPTDSAAEDFMKSHVEPTIRDVPAMLELAPWFGRKHRDNTLTLKRFSSGVGFWCLGGAAAKNYREKSVDVVCYDELSSFEPDVEKEGSPTLLGDKRIEGSVWPKSIRGSTPKIKGSCQIEKAANESAHFMRFYVPCPHCGEEQYLKFGDDASPFGLKWEKNKPESVFYLCEHHGCVIHQSELDQSNGRWICENTGMWTRDGLMFFSARGDEIPPPRSITFHIWTAYSPFTTWVQIVYDWLDALKDPNGLKTFVNTTLGETWEEAVGEKLDHQVLMDKVVRYTAAVPARVVYLTAGIDSQRNRFEMYVWGWAPGEEAFLVDKIIIMGRPDEEETLLRVDAAINKKYRHADGTEMTISRVCWDIGGIDGEIVYQRSKKHGVFRVLPVKGASVYGKPVITMPKTRNQRGVYLCEVGTDTAKEILYARMKADPTPVDEATSYAIRFPDDPEIFSQTEAQQLVAEELVEKWEKGKMRLLWDNKKRRNEALDCLVYAYAALRVSVQRWQLDLAVLAKSREEETTRPTLKELAAKLSGGVNGYSR</sequence>
<evidence type="ECO:0000250" key="1">
    <source>
        <dbReference type="UniProtKB" id="P03708"/>
    </source>
</evidence>
<evidence type="ECO:0000250" key="2">
    <source>
        <dbReference type="UniProtKB" id="P17312"/>
    </source>
</evidence>
<evidence type="ECO:0000255" key="3">
    <source>
        <dbReference type="HAMAP-Rule" id="MF_04144"/>
    </source>
</evidence>
<evidence type="ECO:0000305" key="4"/>